<organism>
    <name type="scientific">Macaca fascicularis</name>
    <name type="common">Crab-eating macaque</name>
    <name type="synonym">Cynomolgus monkey</name>
    <dbReference type="NCBI Taxonomy" id="9541"/>
    <lineage>
        <taxon>Eukaryota</taxon>
        <taxon>Metazoa</taxon>
        <taxon>Chordata</taxon>
        <taxon>Craniata</taxon>
        <taxon>Vertebrata</taxon>
        <taxon>Euteleostomi</taxon>
        <taxon>Mammalia</taxon>
        <taxon>Eutheria</taxon>
        <taxon>Euarchontoglires</taxon>
        <taxon>Primates</taxon>
        <taxon>Haplorrhini</taxon>
        <taxon>Catarrhini</taxon>
        <taxon>Cercopithecidae</taxon>
        <taxon>Cercopithecinae</taxon>
        <taxon>Macaca</taxon>
    </lineage>
</organism>
<name>RSRP1_MACFA</name>
<gene>
    <name type="primary">RSRP1</name>
    <name type="ORF">QtsA-19294</name>
</gene>
<proteinExistence type="evidence at transcript level"/>
<dbReference type="EMBL" id="AB169364">
    <property type="protein sequence ID" value="BAE01449.1"/>
    <property type="molecule type" value="mRNA"/>
</dbReference>
<dbReference type="RefSeq" id="NP_001270090.1">
    <property type="nucleotide sequence ID" value="NM_001283161.1"/>
</dbReference>
<dbReference type="SMR" id="Q4R626"/>
<dbReference type="STRING" id="9541.ENSMFAP00000034460"/>
<dbReference type="eggNOG" id="ENOG502S6J6">
    <property type="taxonomic scope" value="Eukaryota"/>
</dbReference>
<dbReference type="Proteomes" id="UP000233100">
    <property type="component" value="Unplaced"/>
</dbReference>
<dbReference type="GO" id="GO:0005634">
    <property type="term" value="C:nucleus"/>
    <property type="evidence" value="ECO:0000250"/>
    <property type="project" value="UniProtKB"/>
</dbReference>
<dbReference type="GO" id="GO:0000245">
    <property type="term" value="P:spliceosomal complex assembly"/>
    <property type="evidence" value="ECO:0000250"/>
    <property type="project" value="UniProtKB"/>
</dbReference>
<dbReference type="InterPro" id="IPR029656">
    <property type="entry name" value="RSRP1"/>
</dbReference>
<dbReference type="PANTHER" id="PTHR47622">
    <property type="entry name" value="ARGININE/SERINE-RICH PROTEIN 1"/>
    <property type="match status" value="1"/>
</dbReference>
<dbReference type="PANTHER" id="PTHR47622:SF1">
    <property type="entry name" value="ARGININE_SERINE-RICH PROTEIN 1"/>
    <property type="match status" value="1"/>
</dbReference>
<dbReference type="Pfam" id="PF17069">
    <property type="entry name" value="RSRP"/>
    <property type="match status" value="1"/>
</dbReference>
<comment type="function">
    <text evidence="3">Probably acts as a spliceosomal factor that contributes to spliceosome assembly and regulates the isoform switching of proteins such as PARP6.</text>
</comment>
<comment type="subcellular location">
    <subcellularLocation>
        <location evidence="3">Nucleus</location>
    </subcellularLocation>
</comment>
<comment type="PTM">
    <text evidence="3">Phosphorylated. Phosphorylation at Ser-111 and Ser-113 mediates the interaction with spliceosome proteins.</text>
</comment>
<comment type="similarity">
    <text evidence="5">Belongs to the RSRP family.</text>
</comment>
<feature type="chain" id="PRO_0000297618" description="Arginine/serine-rich protein 1">
    <location>
        <begin position="1"/>
        <end position="296"/>
    </location>
</feature>
<feature type="region of interest" description="Disordered" evidence="4">
    <location>
        <begin position="1"/>
        <end position="131"/>
    </location>
</feature>
<feature type="region of interest" description="Disordered" evidence="4">
    <location>
        <begin position="156"/>
        <end position="175"/>
    </location>
</feature>
<feature type="region of interest" description="Disordered" evidence="4">
    <location>
        <begin position="217"/>
        <end position="296"/>
    </location>
</feature>
<feature type="compositionally biased region" description="Low complexity" evidence="4">
    <location>
        <begin position="20"/>
        <end position="31"/>
    </location>
</feature>
<feature type="compositionally biased region" description="Basic residues" evidence="4">
    <location>
        <begin position="32"/>
        <end position="125"/>
    </location>
</feature>
<feature type="compositionally biased region" description="Basic and acidic residues" evidence="4">
    <location>
        <begin position="156"/>
        <end position="165"/>
    </location>
</feature>
<feature type="compositionally biased region" description="Polar residues" evidence="4">
    <location>
        <begin position="245"/>
        <end position="261"/>
    </location>
</feature>
<feature type="compositionally biased region" description="Basic and acidic residues" evidence="4">
    <location>
        <begin position="272"/>
        <end position="287"/>
    </location>
</feature>
<feature type="modified residue" description="Phosphoserine" evidence="1">
    <location>
        <position position="12"/>
    </location>
</feature>
<feature type="modified residue" description="Phosphoserine" evidence="3">
    <location>
        <position position="111"/>
    </location>
</feature>
<feature type="modified residue" description="Phosphoserine" evidence="3">
    <location>
        <position position="113"/>
    </location>
</feature>
<feature type="modified residue" description="Omega-N-methylarginine" evidence="1">
    <location>
        <position position="141"/>
    </location>
</feature>
<feature type="modified residue" description="Phosphoserine" evidence="2">
    <location>
        <position position="280"/>
    </location>
</feature>
<protein>
    <recommendedName>
        <fullName>Arginine/serine-rich protein 1</fullName>
    </recommendedName>
</protein>
<sequence>MSNYVNDMWPGSPQEKDSPSASRSGGSSRLSSRSRSRSFSRSSRSRSRVSSRFSSRSRSRSRRSRSRSRSRRRHQRKYRRYSRSYSRSRSRSRSRRYRERRYGFSRRYYRSPSRSRSRSRSRSRSRSRERSYYGRAYAMARGRRYYGFGRTVYPEERSRWRDRSRTRSRSRTPFRLSEKDRMELLEIAKANAAKALGTTNIDLPASLRTVHVAKETSHGIGVSSNGAKPELSENVTEDGPRNPSEKPSQQRSIAFSSNNSVAKPIQKSAKAATEETSSRSPKIDKKKSPYGLWIPV</sequence>
<keyword id="KW-0488">Methylation</keyword>
<keyword id="KW-0539">Nucleus</keyword>
<keyword id="KW-0597">Phosphoprotein</keyword>
<keyword id="KW-1185">Reference proteome</keyword>
<evidence type="ECO:0000250" key="1">
    <source>
        <dbReference type="UniProtKB" id="Q3UC65"/>
    </source>
</evidence>
<evidence type="ECO:0000250" key="2">
    <source>
        <dbReference type="UniProtKB" id="Q5U2S0"/>
    </source>
</evidence>
<evidence type="ECO:0000250" key="3">
    <source>
        <dbReference type="UniProtKB" id="Q9BUV0"/>
    </source>
</evidence>
<evidence type="ECO:0000256" key="4">
    <source>
        <dbReference type="SAM" id="MobiDB-lite"/>
    </source>
</evidence>
<evidence type="ECO:0000305" key="5"/>
<accession>Q4R626</accession>
<reference key="1">
    <citation type="submission" date="2006-10" db="EMBL/GenBank/DDBJ databases">
        <title>DNA sequences of macaque genes expressed in brain or testis and its evolutionary implications.</title>
        <authorList>
            <consortium name="International consortium for macaque cDNA sequencing and analysis"/>
        </authorList>
    </citation>
    <scope>NUCLEOTIDE SEQUENCE [LARGE SCALE MRNA]</scope>
    <source>
        <tissue>Testis</tissue>
    </source>
</reference>